<comment type="function">
    <text>RNA-dependent RNA polymerase which replicates the viral genome composed of 3 RNA segments, RNA1, RNA2 and RNA3.</text>
</comment>
<comment type="catalytic activity">
    <reaction evidence="2">
        <text>RNA(n) + a ribonucleoside 5'-triphosphate = RNA(n+1) + diphosphate</text>
        <dbReference type="Rhea" id="RHEA:21248"/>
        <dbReference type="Rhea" id="RHEA-COMP:14527"/>
        <dbReference type="Rhea" id="RHEA-COMP:17342"/>
        <dbReference type="ChEBI" id="CHEBI:33019"/>
        <dbReference type="ChEBI" id="CHEBI:61557"/>
        <dbReference type="ChEBI" id="CHEBI:140395"/>
        <dbReference type="EC" id="2.7.7.48"/>
    </reaction>
</comment>
<comment type="subunit">
    <text evidence="1">Interacts with replication protein 1a.</text>
</comment>
<comment type="similarity">
    <text evidence="4">Belongs to the ssRNA positive-strand viruses RNA-directed RNA polymerase family.</text>
</comment>
<accession>P89678</accession>
<name>RDRP_TOBSV</name>
<organismHost>
    <name type="scientific">Asparagus officinalis</name>
    <name type="common">Garden asparagus</name>
    <dbReference type="NCBI Taxonomy" id="4686"/>
</organismHost>
<organismHost>
    <name type="scientific">Dahlia</name>
    <dbReference type="NCBI Taxonomy" id="41562"/>
</organismHost>
<organismHost>
    <name type="scientific">Glycine max</name>
    <name type="common">Soybean</name>
    <name type="synonym">Glycine hispida</name>
    <dbReference type="NCBI Taxonomy" id="3847"/>
</organismHost>
<organismHost>
    <name type="scientific">Gossypium herbaceum</name>
    <name type="common">Levant cotton</name>
    <name type="synonym">Arabian cotton</name>
    <dbReference type="NCBI Taxonomy" id="34274"/>
</organismHost>
<organismHost>
    <name type="scientific">Melilotus albus</name>
    <name type="common">White sweet clover</name>
    <name type="synonym">Melilotus officinalis subsp. albus</name>
    <dbReference type="NCBI Taxonomy" id="47082"/>
</organismHost>
<organismHost>
    <name type="scientific">Nicotiana tabacum</name>
    <name type="common">Common tobacco</name>
    <dbReference type="NCBI Taxonomy" id="4097"/>
</organismHost>
<organismHost>
    <name type="scientific">Phaseolus vulgaris</name>
    <name type="common">Kidney bean</name>
    <name type="synonym">French bean</name>
    <dbReference type="NCBI Taxonomy" id="3885"/>
</organismHost>
<organismHost>
    <name type="scientific">Rosa setigera</name>
    <dbReference type="NCBI Taxonomy" id="137000"/>
</organismHost>
<organismHost>
    <name type="scientific">Trifolium pratense</name>
    <name type="common">Red clover</name>
    <dbReference type="NCBI Taxonomy" id="57577"/>
</organismHost>
<protein>
    <recommendedName>
        <fullName>RNA-directed RNA polymerase 2a</fullName>
        <shortName>2a pol</shortName>
        <ecNumber>2.7.7.48</ecNumber>
    </recommendedName>
    <alternativeName>
        <fullName>2a polymerase</fullName>
    </alternativeName>
</protein>
<sequence>MDLVIKNLIVYHLRRRIDIGTSFGIEPADYIDWVKVFLLKFIIEHTARFADFATIHTTMLLVLGEDDPNYVEKDTPIMEIDPFYLPYDDLDVDYTSLRVCGDEDQSCSDRDELSDFISNISHIPEGTSWGSESDTSFVEHLETIQDIPTKCEIADKPVEEIPFDDDGKVVNDVWVDAELSNAPEISCDADIRACGFVSLRLLESSRGYPKWTPERVSSGLNPDLPVNSKPAVDEIFPHHHSVDDRFFQEWVETHDIDLEVTSCDLDMSTFNDWTKGVDTRLVPNMSVGGLSHRVPTQREALLAIKKRNMNVPELQSNFDHDDVLNRCVTRFITHVVDKTRLSKLNPISGEELHYFNQYLENKNPPLSEYKGPVPLVALDKYMHMIKTTLKPVEEDNLHIERPIPATITYHKKGVVMMTSPYFLCAMVRLLYVLKSKFVVPTGKYHQIFQMNPELLKHSKEFKEIDFSKFDKSQGRLHHDVQFRLFLALGIPEHFVTTWFNSHEKSYIRDRDCGIGFSVDYQRRTGDACTYLGNTLVTLSVLSYVYDLSNPNILFVAASGDDSLIGSIEPLPREKEDLCVSLFNFETKFPHNQPFICSKFLLVVECDDGSEEVLAVPNPLKLLQKLGPKNLQVTVLDDYYQSLCDILWVFNDADVCRRTAELAEYRRFKGTKKCLFLESALLSLPSLVANRMKFVRRTINLESSRACIRNDVYSDLVPHFDSRVSRCDDSDGVRTSTFDDRKSSKHASDKLRKTECYGEARCRIKPRRNRKSESGAVQYSQSSGIETGKANSSRKGRIKLH</sequence>
<feature type="chain" id="PRO_0000402393" description="RNA-directed RNA polymerase 2a">
    <location>
        <begin position="1"/>
        <end position="800"/>
    </location>
</feature>
<feature type="domain" description="RdRp catalytic" evidence="2">
    <location>
        <begin position="459"/>
        <end position="574"/>
    </location>
</feature>
<feature type="region of interest" description="Disordered" evidence="3">
    <location>
        <begin position="766"/>
        <end position="800"/>
    </location>
</feature>
<feature type="compositionally biased region" description="Polar residues" evidence="3">
    <location>
        <begin position="774"/>
        <end position="790"/>
    </location>
</feature>
<feature type="compositionally biased region" description="Basic residues" evidence="3">
    <location>
        <begin position="791"/>
        <end position="800"/>
    </location>
</feature>
<keyword id="KW-0547">Nucleotide-binding</keyword>
<keyword id="KW-0548">Nucleotidyltransferase</keyword>
<keyword id="KW-1185">Reference proteome</keyword>
<keyword id="KW-0696">RNA-directed RNA polymerase</keyword>
<keyword id="KW-0808">Transferase</keyword>
<keyword id="KW-0693">Viral RNA replication</keyword>
<gene>
    <name type="ORF">ORF2a</name>
</gene>
<evidence type="ECO:0000250" key="1"/>
<evidence type="ECO:0000255" key="2">
    <source>
        <dbReference type="PROSITE-ProRule" id="PRU00539"/>
    </source>
</evidence>
<evidence type="ECO:0000256" key="3">
    <source>
        <dbReference type="SAM" id="MobiDB-lite"/>
    </source>
</evidence>
<evidence type="ECO:0000305" key="4"/>
<proteinExistence type="inferred from homology"/>
<organism>
    <name type="scientific">Tobacco streak virus (strain WC)</name>
    <name type="common">TSV</name>
    <dbReference type="NCBI Taxonomy" id="12318"/>
    <lineage>
        <taxon>Viruses</taxon>
        <taxon>Riboviria</taxon>
        <taxon>Orthornavirae</taxon>
        <taxon>Kitrinoviricota</taxon>
        <taxon>Alsuviricetes</taxon>
        <taxon>Martellivirales</taxon>
        <taxon>Bromoviridae</taxon>
        <taxon>Ilarvirus</taxon>
        <taxon>Tobacco streak virus</taxon>
    </lineage>
</organism>
<reference key="1">
    <citation type="journal article" date="1998" name="Arch. Virol.">
        <title>The sequence of RNA 1 and RNA 2 of tobacco streak virus: additional evidence for the inclusion of alfalfa mosaic virus in the genus Ilarvirus.</title>
        <authorList>
            <person name="Scott S.W."/>
            <person name="Zimmerman M.T."/>
            <person name="Ge X."/>
        </authorList>
    </citation>
    <scope>NUCLEOTIDE SEQUENCE [GENOMIC RNA]</scope>
</reference>
<dbReference type="EC" id="2.7.7.48"/>
<dbReference type="EMBL" id="U75538">
    <property type="protein sequence ID" value="AAB48409.1"/>
    <property type="molecule type" value="Genomic_RNA"/>
</dbReference>
<dbReference type="RefSeq" id="NP_620768.1">
    <property type="nucleotide sequence ID" value="NC_003842.1"/>
</dbReference>
<dbReference type="KEGG" id="vg:962656"/>
<dbReference type="Proteomes" id="UP000007795">
    <property type="component" value="Genome"/>
</dbReference>
<dbReference type="GO" id="GO:0000166">
    <property type="term" value="F:nucleotide binding"/>
    <property type="evidence" value="ECO:0007669"/>
    <property type="project" value="UniProtKB-KW"/>
</dbReference>
<dbReference type="GO" id="GO:0003723">
    <property type="term" value="F:RNA binding"/>
    <property type="evidence" value="ECO:0007669"/>
    <property type="project" value="InterPro"/>
</dbReference>
<dbReference type="GO" id="GO:0003968">
    <property type="term" value="F:RNA-directed RNA polymerase activity"/>
    <property type="evidence" value="ECO:0007669"/>
    <property type="project" value="UniProtKB-KW"/>
</dbReference>
<dbReference type="GO" id="GO:0006351">
    <property type="term" value="P:DNA-templated transcription"/>
    <property type="evidence" value="ECO:0007669"/>
    <property type="project" value="InterPro"/>
</dbReference>
<dbReference type="GO" id="GO:0039690">
    <property type="term" value="P:positive stranded viral RNA replication"/>
    <property type="evidence" value="ECO:0007669"/>
    <property type="project" value="InterPro"/>
</dbReference>
<dbReference type="CDD" id="cd23252">
    <property type="entry name" value="Bromoviridae_RdRp"/>
    <property type="match status" value="1"/>
</dbReference>
<dbReference type="InterPro" id="IPR047309">
    <property type="entry name" value="Bromoviridae_RdRp"/>
</dbReference>
<dbReference type="InterPro" id="IPR043502">
    <property type="entry name" value="DNA/RNA_pol_sf"/>
</dbReference>
<dbReference type="InterPro" id="IPR001788">
    <property type="entry name" value="RNA-dep_RNA_pol_alsuvir"/>
</dbReference>
<dbReference type="InterPro" id="IPR007094">
    <property type="entry name" value="RNA-dir_pol_PSvirus"/>
</dbReference>
<dbReference type="Pfam" id="PF00978">
    <property type="entry name" value="RdRP_2"/>
    <property type="match status" value="1"/>
</dbReference>
<dbReference type="SUPFAM" id="SSF56672">
    <property type="entry name" value="DNA/RNA polymerases"/>
    <property type="match status" value="1"/>
</dbReference>
<dbReference type="PROSITE" id="PS50507">
    <property type="entry name" value="RDRP_SSRNA_POS"/>
    <property type="match status" value="1"/>
</dbReference>